<dbReference type="EC" id="2.8.1.8" evidence="1"/>
<dbReference type="EMBL" id="AM920689">
    <property type="protein sequence ID" value="CAP50084.1"/>
    <property type="molecule type" value="Genomic_DNA"/>
</dbReference>
<dbReference type="SMR" id="B0RNP9"/>
<dbReference type="KEGG" id="xca:xcc-b100_0745"/>
<dbReference type="HOGENOM" id="CLU_033144_2_1_6"/>
<dbReference type="UniPathway" id="UPA00538">
    <property type="reaction ID" value="UER00593"/>
</dbReference>
<dbReference type="Proteomes" id="UP000001188">
    <property type="component" value="Chromosome"/>
</dbReference>
<dbReference type="GO" id="GO:0005737">
    <property type="term" value="C:cytoplasm"/>
    <property type="evidence" value="ECO:0007669"/>
    <property type="project" value="UniProtKB-SubCell"/>
</dbReference>
<dbReference type="GO" id="GO:0051539">
    <property type="term" value="F:4 iron, 4 sulfur cluster binding"/>
    <property type="evidence" value="ECO:0007669"/>
    <property type="project" value="UniProtKB-UniRule"/>
</dbReference>
<dbReference type="GO" id="GO:0016992">
    <property type="term" value="F:lipoate synthase activity"/>
    <property type="evidence" value="ECO:0007669"/>
    <property type="project" value="UniProtKB-UniRule"/>
</dbReference>
<dbReference type="GO" id="GO:0046872">
    <property type="term" value="F:metal ion binding"/>
    <property type="evidence" value="ECO:0007669"/>
    <property type="project" value="UniProtKB-KW"/>
</dbReference>
<dbReference type="CDD" id="cd01335">
    <property type="entry name" value="Radical_SAM"/>
    <property type="match status" value="1"/>
</dbReference>
<dbReference type="FunFam" id="3.20.20.70:FF:000023">
    <property type="entry name" value="Lipoyl synthase"/>
    <property type="match status" value="1"/>
</dbReference>
<dbReference type="Gene3D" id="3.20.20.70">
    <property type="entry name" value="Aldolase class I"/>
    <property type="match status" value="1"/>
</dbReference>
<dbReference type="HAMAP" id="MF_00206">
    <property type="entry name" value="Lipoyl_synth"/>
    <property type="match status" value="1"/>
</dbReference>
<dbReference type="InterPro" id="IPR013785">
    <property type="entry name" value="Aldolase_TIM"/>
</dbReference>
<dbReference type="InterPro" id="IPR006638">
    <property type="entry name" value="Elp3/MiaA/NifB-like_rSAM"/>
</dbReference>
<dbReference type="InterPro" id="IPR031691">
    <property type="entry name" value="LIAS_N"/>
</dbReference>
<dbReference type="InterPro" id="IPR003698">
    <property type="entry name" value="Lipoyl_synth"/>
</dbReference>
<dbReference type="InterPro" id="IPR007197">
    <property type="entry name" value="rSAM"/>
</dbReference>
<dbReference type="NCBIfam" id="TIGR00510">
    <property type="entry name" value="lipA"/>
    <property type="match status" value="1"/>
</dbReference>
<dbReference type="NCBIfam" id="NF004019">
    <property type="entry name" value="PRK05481.1"/>
    <property type="match status" value="1"/>
</dbReference>
<dbReference type="NCBIfam" id="NF009544">
    <property type="entry name" value="PRK12928.1"/>
    <property type="match status" value="1"/>
</dbReference>
<dbReference type="PANTHER" id="PTHR10949">
    <property type="entry name" value="LIPOYL SYNTHASE"/>
    <property type="match status" value="1"/>
</dbReference>
<dbReference type="PANTHER" id="PTHR10949:SF0">
    <property type="entry name" value="LIPOYL SYNTHASE, MITOCHONDRIAL"/>
    <property type="match status" value="1"/>
</dbReference>
<dbReference type="Pfam" id="PF16881">
    <property type="entry name" value="LIAS_N"/>
    <property type="match status" value="1"/>
</dbReference>
<dbReference type="Pfam" id="PF04055">
    <property type="entry name" value="Radical_SAM"/>
    <property type="match status" value="1"/>
</dbReference>
<dbReference type="PIRSF" id="PIRSF005963">
    <property type="entry name" value="Lipoyl_synth"/>
    <property type="match status" value="1"/>
</dbReference>
<dbReference type="SFLD" id="SFLDF00271">
    <property type="entry name" value="lipoyl_synthase"/>
    <property type="match status" value="1"/>
</dbReference>
<dbReference type="SFLD" id="SFLDS00029">
    <property type="entry name" value="Radical_SAM"/>
    <property type="match status" value="1"/>
</dbReference>
<dbReference type="SMART" id="SM00729">
    <property type="entry name" value="Elp3"/>
    <property type="match status" value="1"/>
</dbReference>
<dbReference type="SUPFAM" id="SSF102114">
    <property type="entry name" value="Radical SAM enzymes"/>
    <property type="match status" value="1"/>
</dbReference>
<dbReference type="PROSITE" id="PS51918">
    <property type="entry name" value="RADICAL_SAM"/>
    <property type="match status" value="1"/>
</dbReference>
<sequence>MTQPIARSIPLQVVSGDTAAPASLQTGVKQIGGDKINRSPVQFVDAPVLRKPSWIRVRIPSGNAVQNLKAKLRENRLVTVCEEASCPNIHECFSHGTATFMILGEVCTRRCSFCDVAHGRPKPPDASEPTSLATTVADMGLKYVVVTSVDRDDLRDGGAQHFVDCISAIRASAPKTRIEILTPDFRGKGRMDRALEILATSPPDVFNHNIETVPDLYPNVRPGADYQWSLTLLQRFKAQHPTIATKSGIMLGLGETMEQVQATLRDLRAHDVDMITIGQYLQPTPHHHPVMRYWTPEEYKALEDYGNALGFSHVASGPMVRSSYHADRQAAGAGVAA</sequence>
<accession>B0RNP9</accession>
<organism>
    <name type="scientific">Xanthomonas campestris pv. campestris (strain B100)</name>
    <dbReference type="NCBI Taxonomy" id="509169"/>
    <lineage>
        <taxon>Bacteria</taxon>
        <taxon>Pseudomonadati</taxon>
        <taxon>Pseudomonadota</taxon>
        <taxon>Gammaproteobacteria</taxon>
        <taxon>Lysobacterales</taxon>
        <taxon>Lysobacteraceae</taxon>
        <taxon>Xanthomonas</taxon>
    </lineage>
</organism>
<gene>
    <name evidence="1" type="primary">lipA</name>
    <name type="ordered locus">xcc-b100_0745</name>
</gene>
<protein>
    <recommendedName>
        <fullName evidence="1">Lipoyl synthase</fullName>
        <ecNumber evidence="1">2.8.1.8</ecNumber>
    </recommendedName>
    <alternativeName>
        <fullName evidence="1">Lip-syn</fullName>
        <shortName evidence="1">LS</shortName>
    </alternativeName>
    <alternativeName>
        <fullName evidence="1">Lipoate synthase</fullName>
    </alternativeName>
    <alternativeName>
        <fullName evidence="1">Lipoic acid synthase</fullName>
    </alternativeName>
    <alternativeName>
        <fullName evidence="1">Sulfur insertion protein LipA</fullName>
    </alternativeName>
</protein>
<reference key="1">
    <citation type="journal article" date="2008" name="J. Biotechnol.">
        <title>The genome of Xanthomonas campestris pv. campestris B100 and its use for the reconstruction of metabolic pathways involved in xanthan biosynthesis.</title>
        <authorList>
            <person name="Vorhoelter F.-J."/>
            <person name="Schneiker S."/>
            <person name="Goesmann A."/>
            <person name="Krause L."/>
            <person name="Bekel T."/>
            <person name="Kaiser O."/>
            <person name="Linke B."/>
            <person name="Patschkowski T."/>
            <person name="Rueckert C."/>
            <person name="Schmid J."/>
            <person name="Sidhu V.K."/>
            <person name="Sieber V."/>
            <person name="Tauch A."/>
            <person name="Watt S.A."/>
            <person name="Weisshaar B."/>
            <person name="Becker A."/>
            <person name="Niehaus K."/>
            <person name="Puehler A."/>
        </authorList>
    </citation>
    <scope>NUCLEOTIDE SEQUENCE [LARGE SCALE GENOMIC DNA]</scope>
    <source>
        <strain>B100</strain>
    </source>
</reference>
<keyword id="KW-0004">4Fe-4S</keyword>
<keyword id="KW-0963">Cytoplasm</keyword>
<keyword id="KW-0408">Iron</keyword>
<keyword id="KW-0411">Iron-sulfur</keyword>
<keyword id="KW-0479">Metal-binding</keyword>
<keyword id="KW-0949">S-adenosyl-L-methionine</keyword>
<keyword id="KW-0808">Transferase</keyword>
<comment type="function">
    <text evidence="1">Catalyzes the radical-mediated insertion of two sulfur atoms into the C-6 and C-8 positions of the octanoyl moiety bound to the lipoyl domains of lipoate-dependent enzymes, thereby converting the octanoylated domains into lipoylated derivatives.</text>
</comment>
<comment type="catalytic activity">
    <reaction evidence="1">
        <text>[[Fe-S] cluster scaffold protein carrying a second [4Fe-4S](2+) cluster] + N(6)-octanoyl-L-lysyl-[protein] + 2 oxidized [2Fe-2S]-[ferredoxin] + 2 S-adenosyl-L-methionine + 4 H(+) = [[Fe-S] cluster scaffold protein] + N(6)-[(R)-dihydrolipoyl]-L-lysyl-[protein] + 4 Fe(3+) + 2 hydrogen sulfide + 2 5'-deoxyadenosine + 2 L-methionine + 2 reduced [2Fe-2S]-[ferredoxin]</text>
        <dbReference type="Rhea" id="RHEA:16585"/>
        <dbReference type="Rhea" id="RHEA-COMP:9928"/>
        <dbReference type="Rhea" id="RHEA-COMP:10000"/>
        <dbReference type="Rhea" id="RHEA-COMP:10001"/>
        <dbReference type="Rhea" id="RHEA-COMP:10475"/>
        <dbReference type="Rhea" id="RHEA-COMP:14568"/>
        <dbReference type="Rhea" id="RHEA-COMP:14569"/>
        <dbReference type="ChEBI" id="CHEBI:15378"/>
        <dbReference type="ChEBI" id="CHEBI:17319"/>
        <dbReference type="ChEBI" id="CHEBI:29034"/>
        <dbReference type="ChEBI" id="CHEBI:29919"/>
        <dbReference type="ChEBI" id="CHEBI:33722"/>
        <dbReference type="ChEBI" id="CHEBI:33737"/>
        <dbReference type="ChEBI" id="CHEBI:33738"/>
        <dbReference type="ChEBI" id="CHEBI:57844"/>
        <dbReference type="ChEBI" id="CHEBI:59789"/>
        <dbReference type="ChEBI" id="CHEBI:78809"/>
        <dbReference type="ChEBI" id="CHEBI:83100"/>
        <dbReference type="EC" id="2.8.1.8"/>
    </reaction>
</comment>
<comment type="cofactor">
    <cofactor evidence="1">
        <name>[4Fe-4S] cluster</name>
        <dbReference type="ChEBI" id="CHEBI:49883"/>
    </cofactor>
    <text evidence="1">Binds 2 [4Fe-4S] clusters per subunit. One cluster is coordinated with 3 cysteines and an exchangeable S-adenosyl-L-methionine.</text>
</comment>
<comment type="pathway">
    <text evidence="1">Protein modification; protein lipoylation via endogenous pathway; protein N(6)-(lipoyl)lysine from octanoyl-[acyl-carrier-protein]: step 2/2.</text>
</comment>
<comment type="subcellular location">
    <subcellularLocation>
        <location evidence="1">Cytoplasm</location>
    </subcellularLocation>
</comment>
<comment type="similarity">
    <text evidence="1">Belongs to the radical SAM superfamily. Lipoyl synthase family.</text>
</comment>
<name>LIPA_XANCB</name>
<evidence type="ECO:0000255" key="1">
    <source>
        <dbReference type="HAMAP-Rule" id="MF_00206"/>
    </source>
</evidence>
<evidence type="ECO:0000255" key="2">
    <source>
        <dbReference type="PROSITE-ProRule" id="PRU01266"/>
    </source>
</evidence>
<proteinExistence type="inferred from homology"/>
<feature type="chain" id="PRO_1000099642" description="Lipoyl synthase">
    <location>
        <begin position="1"/>
        <end position="337"/>
    </location>
</feature>
<feature type="domain" description="Radical SAM core" evidence="2">
    <location>
        <begin position="93"/>
        <end position="312"/>
    </location>
</feature>
<feature type="binding site" evidence="1">
    <location>
        <position position="81"/>
    </location>
    <ligand>
        <name>[4Fe-4S] cluster</name>
        <dbReference type="ChEBI" id="CHEBI:49883"/>
        <label>1</label>
    </ligand>
</feature>
<feature type="binding site" evidence="1">
    <location>
        <position position="86"/>
    </location>
    <ligand>
        <name>[4Fe-4S] cluster</name>
        <dbReference type="ChEBI" id="CHEBI:49883"/>
        <label>1</label>
    </ligand>
</feature>
<feature type="binding site" evidence="1">
    <location>
        <position position="92"/>
    </location>
    <ligand>
        <name>[4Fe-4S] cluster</name>
        <dbReference type="ChEBI" id="CHEBI:49883"/>
        <label>1</label>
    </ligand>
</feature>
<feature type="binding site" evidence="1">
    <location>
        <position position="107"/>
    </location>
    <ligand>
        <name>[4Fe-4S] cluster</name>
        <dbReference type="ChEBI" id="CHEBI:49883"/>
        <label>2</label>
        <note>4Fe-4S-S-AdoMet</note>
    </ligand>
</feature>
<feature type="binding site" evidence="1">
    <location>
        <position position="111"/>
    </location>
    <ligand>
        <name>[4Fe-4S] cluster</name>
        <dbReference type="ChEBI" id="CHEBI:49883"/>
        <label>2</label>
        <note>4Fe-4S-S-AdoMet</note>
    </ligand>
</feature>
<feature type="binding site" evidence="1">
    <location>
        <position position="114"/>
    </location>
    <ligand>
        <name>[4Fe-4S] cluster</name>
        <dbReference type="ChEBI" id="CHEBI:49883"/>
        <label>2</label>
        <note>4Fe-4S-S-AdoMet</note>
    </ligand>
</feature>
<feature type="binding site" evidence="1">
    <location>
        <position position="323"/>
    </location>
    <ligand>
        <name>[4Fe-4S] cluster</name>
        <dbReference type="ChEBI" id="CHEBI:49883"/>
        <label>1</label>
    </ligand>
</feature>